<name>PYRC_AERPE</name>
<keyword id="KW-0378">Hydrolase</keyword>
<keyword id="KW-0479">Metal-binding</keyword>
<keyword id="KW-0665">Pyrimidine biosynthesis</keyword>
<keyword id="KW-1185">Reference proteome</keyword>
<keyword id="KW-0862">Zinc</keyword>
<accession>Q9YFI5</accession>
<proteinExistence type="inferred from homology"/>
<protein>
    <recommendedName>
        <fullName evidence="1">Dihydroorotase</fullName>
        <shortName evidence="1">DHOase</shortName>
        <ecNumber evidence="1">3.5.2.3</ecNumber>
    </recommendedName>
</protein>
<gene>
    <name evidence="1" type="primary">pyrC</name>
    <name type="ordered locus">APE_0261.1</name>
</gene>
<sequence>MAGWTVCVDFLYTGDKMLEDACAVISGERVERVHTGGFRGQPDLDLRGRSSLALPGVIDMHVHLRGLKLSYKEDEVSGTAAAASGCVTLVADMPNTQPPLRTPEALREKLASLEAGAKVDYTVYAGVPRSYGEAVEMASMGIAGFKIYPEDLVNLDSIKNVLEAAEEAGILVVLHPESHDMFAGPDYGWLRRVARPCHAEAASVELLHDAARECGCKPRVHITHASCPATVVESKKRGFTVDVTPHHLFLSEEEVAGPTHSWGKVNPPLRGVGERSLLTQLTIEGLVDAIASDHAPHSTWEKWMHPAIAPPGFPWLEWWPGFTAARLMRAVGLERFYSMVSQTPSTILGVGDRCLWDGCPATISVLQLERTRVYHKGYTKALYTPVLGMESFDCAATVIRGKIAYTAWEGVRGGATGVLATRVVH</sequence>
<reference key="1">
    <citation type="journal article" date="1999" name="DNA Res.">
        <title>Complete genome sequence of an aerobic hyper-thermophilic crenarchaeon, Aeropyrum pernix K1.</title>
        <authorList>
            <person name="Kawarabayasi Y."/>
            <person name="Hino Y."/>
            <person name="Horikawa H."/>
            <person name="Yamazaki S."/>
            <person name="Haikawa Y."/>
            <person name="Jin-no K."/>
            <person name="Takahashi M."/>
            <person name="Sekine M."/>
            <person name="Baba S."/>
            <person name="Ankai A."/>
            <person name="Kosugi H."/>
            <person name="Hosoyama A."/>
            <person name="Fukui S."/>
            <person name="Nagai Y."/>
            <person name="Nishijima K."/>
            <person name="Nakazawa H."/>
            <person name="Takamiya M."/>
            <person name="Masuda S."/>
            <person name="Funahashi T."/>
            <person name="Tanaka T."/>
            <person name="Kudoh Y."/>
            <person name="Yamazaki J."/>
            <person name="Kushida N."/>
            <person name="Oguchi A."/>
            <person name="Aoki K."/>
            <person name="Kubota K."/>
            <person name="Nakamura Y."/>
            <person name="Nomura N."/>
            <person name="Sako Y."/>
            <person name="Kikuchi H."/>
        </authorList>
    </citation>
    <scope>NUCLEOTIDE SEQUENCE [LARGE SCALE GENOMIC DNA]</scope>
    <source>
        <strain>ATCC 700893 / DSM 11879 / JCM 9820 / NBRC 100138 / K1</strain>
    </source>
</reference>
<comment type="function">
    <text evidence="1">Catalyzes the reversible cyclization of carbamoyl aspartate to dihydroorotate.</text>
</comment>
<comment type="catalytic activity">
    <reaction evidence="1">
        <text>(S)-dihydroorotate + H2O = N-carbamoyl-L-aspartate + H(+)</text>
        <dbReference type="Rhea" id="RHEA:24296"/>
        <dbReference type="ChEBI" id="CHEBI:15377"/>
        <dbReference type="ChEBI" id="CHEBI:15378"/>
        <dbReference type="ChEBI" id="CHEBI:30864"/>
        <dbReference type="ChEBI" id="CHEBI:32814"/>
        <dbReference type="EC" id="3.5.2.3"/>
    </reaction>
</comment>
<comment type="cofactor">
    <cofactor evidence="1">
        <name>Zn(2+)</name>
        <dbReference type="ChEBI" id="CHEBI:29105"/>
    </cofactor>
    <text evidence="1">Binds 2 Zn(2+) ions per subunit.</text>
</comment>
<comment type="pathway">
    <text evidence="1">Pyrimidine metabolism; UMP biosynthesis via de novo pathway; (S)-dihydroorotate from bicarbonate: step 3/3.</text>
</comment>
<comment type="similarity">
    <text evidence="1">Belongs to the metallo-dependent hydrolases superfamily. DHOase family. Class I DHOase subfamily.</text>
</comment>
<organism>
    <name type="scientific">Aeropyrum pernix (strain ATCC 700893 / DSM 11879 / JCM 9820 / NBRC 100138 / K1)</name>
    <dbReference type="NCBI Taxonomy" id="272557"/>
    <lineage>
        <taxon>Archaea</taxon>
        <taxon>Thermoproteota</taxon>
        <taxon>Thermoprotei</taxon>
        <taxon>Desulfurococcales</taxon>
        <taxon>Desulfurococcaceae</taxon>
        <taxon>Aeropyrum</taxon>
    </lineage>
</organism>
<evidence type="ECO:0000255" key="1">
    <source>
        <dbReference type="HAMAP-Rule" id="MF_00220"/>
    </source>
</evidence>
<feature type="chain" id="PRO_0000147266" description="Dihydroorotase">
    <location>
        <begin position="1"/>
        <end position="425"/>
    </location>
</feature>
<feature type="active site" evidence="1">
    <location>
        <position position="293"/>
    </location>
</feature>
<feature type="binding site" evidence="1">
    <location>
        <position position="61"/>
    </location>
    <ligand>
        <name>Zn(2+)</name>
        <dbReference type="ChEBI" id="CHEBI:29105"/>
        <label>1</label>
    </ligand>
</feature>
<feature type="binding site" evidence="1">
    <location>
        <begin position="63"/>
        <end position="65"/>
    </location>
    <ligand>
        <name>substrate</name>
    </ligand>
</feature>
<feature type="binding site" evidence="1">
    <location>
        <position position="63"/>
    </location>
    <ligand>
        <name>Zn(2+)</name>
        <dbReference type="ChEBI" id="CHEBI:29105"/>
        <label>1</label>
    </ligand>
</feature>
<feature type="binding site" evidence="1">
    <location>
        <position position="95"/>
    </location>
    <ligand>
        <name>substrate</name>
    </ligand>
</feature>
<feature type="binding site" evidence="1">
    <location>
        <position position="146"/>
    </location>
    <ligand>
        <name>Zn(2+)</name>
        <dbReference type="ChEBI" id="CHEBI:29105"/>
        <label>1</label>
    </ligand>
</feature>
<feature type="binding site" evidence="1">
    <location>
        <position position="146"/>
    </location>
    <ligand>
        <name>Zn(2+)</name>
        <dbReference type="ChEBI" id="CHEBI:29105"/>
        <label>2</label>
    </ligand>
</feature>
<feature type="binding site" evidence="1">
    <location>
        <position position="175"/>
    </location>
    <ligand>
        <name>Zn(2+)</name>
        <dbReference type="ChEBI" id="CHEBI:29105"/>
        <label>2</label>
    </ligand>
</feature>
<feature type="binding site" evidence="1">
    <location>
        <position position="224"/>
    </location>
    <ligand>
        <name>Zn(2+)</name>
        <dbReference type="ChEBI" id="CHEBI:29105"/>
        <label>2</label>
    </ligand>
</feature>
<feature type="binding site" evidence="1">
    <location>
        <position position="293"/>
    </location>
    <ligand>
        <name>Zn(2+)</name>
        <dbReference type="ChEBI" id="CHEBI:29105"/>
        <label>1</label>
    </ligand>
</feature>
<feature type="binding site" evidence="1">
    <location>
        <position position="297"/>
    </location>
    <ligand>
        <name>substrate</name>
    </ligand>
</feature>
<feature type="binding site" evidence="1">
    <location>
        <begin position="311"/>
        <end position="312"/>
    </location>
    <ligand>
        <name>substrate</name>
    </ligand>
</feature>
<feature type="modified residue" description="N6-carboxylysine" evidence="1">
    <location>
        <position position="146"/>
    </location>
</feature>
<dbReference type="EC" id="3.5.2.3" evidence="1"/>
<dbReference type="EMBL" id="BA000002">
    <property type="protein sequence ID" value="BAA79176.2"/>
    <property type="molecule type" value="Genomic_DNA"/>
</dbReference>
<dbReference type="PIR" id="F72784">
    <property type="entry name" value="F72784"/>
</dbReference>
<dbReference type="RefSeq" id="WP_010865611.1">
    <property type="nucleotide sequence ID" value="NC_000854.2"/>
</dbReference>
<dbReference type="SMR" id="Q9YFI5"/>
<dbReference type="STRING" id="272557.APE_0261.1"/>
<dbReference type="EnsemblBacteria" id="BAA79176">
    <property type="protein sequence ID" value="BAA79176"/>
    <property type="gene ID" value="APE_0261.1"/>
</dbReference>
<dbReference type="GeneID" id="1445773"/>
<dbReference type="KEGG" id="ape:APE_0261.1"/>
<dbReference type="PATRIC" id="fig|272557.25.peg.190"/>
<dbReference type="eggNOG" id="arCOG00689">
    <property type="taxonomic scope" value="Archaea"/>
</dbReference>
<dbReference type="UniPathway" id="UPA00070">
    <property type="reaction ID" value="UER00117"/>
</dbReference>
<dbReference type="Proteomes" id="UP000002518">
    <property type="component" value="Chromosome"/>
</dbReference>
<dbReference type="GO" id="GO:0005737">
    <property type="term" value="C:cytoplasm"/>
    <property type="evidence" value="ECO:0007669"/>
    <property type="project" value="TreeGrafter"/>
</dbReference>
<dbReference type="GO" id="GO:0004038">
    <property type="term" value="F:allantoinase activity"/>
    <property type="evidence" value="ECO:0007669"/>
    <property type="project" value="TreeGrafter"/>
</dbReference>
<dbReference type="GO" id="GO:0004151">
    <property type="term" value="F:dihydroorotase activity"/>
    <property type="evidence" value="ECO:0007669"/>
    <property type="project" value="UniProtKB-UniRule"/>
</dbReference>
<dbReference type="GO" id="GO:0008270">
    <property type="term" value="F:zinc ion binding"/>
    <property type="evidence" value="ECO:0007669"/>
    <property type="project" value="UniProtKB-UniRule"/>
</dbReference>
<dbReference type="GO" id="GO:0044205">
    <property type="term" value="P:'de novo' UMP biosynthetic process"/>
    <property type="evidence" value="ECO:0007669"/>
    <property type="project" value="UniProtKB-UniRule"/>
</dbReference>
<dbReference type="GO" id="GO:0006145">
    <property type="term" value="P:purine nucleobase catabolic process"/>
    <property type="evidence" value="ECO:0007669"/>
    <property type="project" value="TreeGrafter"/>
</dbReference>
<dbReference type="CDD" id="cd01318">
    <property type="entry name" value="DHOase_IIb"/>
    <property type="match status" value="1"/>
</dbReference>
<dbReference type="Gene3D" id="3.20.20.140">
    <property type="entry name" value="Metal-dependent hydrolases"/>
    <property type="match status" value="1"/>
</dbReference>
<dbReference type="HAMAP" id="MF_00220_A">
    <property type="entry name" value="PyrC_classI_A"/>
    <property type="match status" value="1"/>
</dbReference>
<dbReference type="InterPro" id="IPR006680">
    <property type="entry name" value="Amidohydro-rel"/>
</dbReference>
<dbReference type="InterPro" id="IPR004722">
    <property type="entry name" value="DHOase"/>
</dbReference>
<dbReference type="InterPro" id="IPR050138">
    <property type="entry name" value="DHOase/Allantoinase_Hydrolase"/>
</dbReference>
<dbReference type="InterPro" id="IPR002195">
    <property type="entry name" value="Dihydroorotase_CS"/>
</dbReference>
<dbReference type="InterPro" id="IPR032466">
    <property type="entry name" value="Metal_Hydrolase"/>
</dbReference>
<dbReference type="NCBIfam" id="NF001541">
    <property type="entry name" value="PRK00369.1"/>
    <property type="match status" value="1"/>
</dbReference>
<dbReference type="NCBIfam" id="TIGR00857">
    <property type="entry name" value="pyrC_multi"/>
    <property type="match status" value="1"/>
</dbReference>
<dbReference type="PANTHER" id="PTHR43668">
    <property type="entry name" value="ALLANTOINASE"/>
    <property type="match status" value="1"/>
</dbReference>
<dbReference type="PANTHER" id="PTHR43668:SF2">
    <property type="entry name" value="ALLANTOINASE"/>
    <property type="match status" value="1"/>
</dbReference>
<dbReference type="Pfam" id="PF01979">
    <property type="entry name" value="Amidohydro_1"/>
    <property type="match status" value="1"/>
</dbReference>
<dbReference type="SUPFAM" id="SSF51556">
    <property type="entry name" value="Metallo-dependent hydrolases"/>
    <property type="match status" value="1"/>
</dbReference>
<dbReference type="PROSITE" id="PS00483">
    <property type="entry name" value="DIHYDROOROTASE_2"/>
    <property type="match status" value="1"/>
</dbReference>